<accession>O14400</accession>
<gene>
    <name type="primary">gut2</name>
    <name type="ORF">SPCC1223.03c</name>
</gene>
<organism>
    <name type="scientific">Schizosaccharomyces pombe (strain 972 / ATCC 24843)</name>
    <name type="common">Fission yeast</name>
    <dbReference type="NCBI Taxonomy" id="284812"/>
    <lineage>
        <taxon>Eukaryota</taxon>
        <taxon>Fungi</taxon>
        <taxon>Dikarya</taxon>
        <taxon>Ascomycota</taxon>
        <taxon>Taphrinomycotina</taxon>
        <taxon>Schizosaccharomycetes</taxon>
        <taxon>Schizosaccharomycetales</taxon>
        <taxon>Schizosaccharomycetaceae</taxon>
        <taxon>Schizosaccharomyces</taxon>
    </lineage>
</organism>
<name>GPDM_SCHPO</name>
<keyword id="KW-0274">FAD</keyword>
<keyword id="KW-0285">Flavoprotein</keyword>
<keyword id="KW-0496">Mitochondrion</keyword>
<keyword id="KW-0560">Oxidoreductase</keyword>
<keyword id="KW-1185">Reference proteome</keyword>
<keyword id="KW-0809">Transit peptide</keyword>
<protein>
    <recommendedName>
        <fullName>Glycerol-3-phosphate dehydrogenase, mitochondrial</fullName>
        <shortName>GPD-M</shortName>
        <shortName>GPDH-M</shortName>
        <ecNumber>1.1.5.3</ecNumber>
    </recommendedName>
</protein>
<reference key="1">
    <citation type="submission" date="1997-09" db="EMBL/GenBank/DDBJ databases">
        <authorList>
            <person name="Hansen K."/>
        </authorList>
    </citation>
    <scope>NUCLEOTIDE SEQUENCE [GENOMIC DNA]</scope>
</reference>
<reference key="2">
    <citation type="journal article" date="2002" name="Nature">
        <title>The genome sequence of Schizosaccharomyces pombe.</title>
        <authorList>
            <person name="Wood V."/>
            <person name="Gwilliam R."/>
            <person name="Rajandream M.A."/>
            <person name="Lyne M.H."/>
            <person name="Lyne R."/>
            <person name="Stewart A."/>
            <person name="Sgouros J.G."/>
            <person name="Peat N."/>
            <person name="Hayles J."/>
            <person name="Baker S.G."/>
            <person name="Basham D."/>
            <person name="Bowman S."/>
            <person name="Brooks K."/>
            <person name="Brown D."/>
            <person name="Brown S."/>
            <person name="Chillingworth T."/>
            <person name="Churcher C.M."/>
            <person name="Collins M."/>
            <person name="Connor R."/>
            <person name="Cronin A."/>
            <person name="Davis P."/>
            <person name="Feltwell T."/>
            <person name="Fraser A."/>
            <person name="Gentles S."/>
            <person name="Goble A."/>
            <person name="Hamlin N."/>
            <person name="Harris D.E."/>
            <person name="Hidalgo J."/>
            <person name="Hodgson G."/>
            <person name="Holroyd S."/>
            <person name="Hornsby T."/>
            <person name="Howarth S."/>
            <person name="Huckle E.J."/>
            <person name="Hunt S."/>
            <person name="Jagels K."/>
            <person name="James K.D."/>
            <person name="Jones L."/>
            <person name="Jones M."/>
            <person name="Leather S."/>
            <person name="McDonald S."/>
            <person name="McLean J."/>
            <person name="Mooney P."/>
            <person name="Moule S."/>
            <person name="Mungall K.L."/>
            <person name="Murphy L.D."/>
            <person name="Niblett D."/>
            <person name="Odell C."/>
            <person name="Oliver K."/>
            <person name="O'Neil S."/>
            <person name="Pearson D."/>
            <person name="Quail M.A."/>
            <person name="Rabbinowitsch E."/>
            <person name="Rutherford K.M."/>
            <person name="Rutter S."/>
            <person name="Saunders D."/>
            <person name="Seeger K."/>
            <person name="Sharp S."/>
            <person name="Skelton J."/>
            <person name="Simmonds M.N."/>
            <person name="Squares R."/>
            <person name="Squares S."/>
            <person name="Stevens K."/>
            <person name="Taylor K."/>
            <person name="Taylor R.G."/>
            <person name="Tivey A."/>
            <person name="Walsh S.V."/>
            <person name="Warren T."/>
            <person name="Whitehead S."/>
            <person name="Woodward J.R."/>
            <person name="Volckaert G."/>
            <person name="Aert R."/>
            <person name="Robben J."/>
            <person name="Grymonprez B."/>
            <person name="Weltjens I."/>
            <person name="Vanstreels E."/>
            <person name="Rieger M."/>
            <person name="Schaefer M."/>
            <person name="Mueller-Auer S."/>
            <person name="Gabel C."/>
            <person name="Fuchs M."/>
            <person name="Duesterhoeft A."/>
            <person name="Fritzc C."/>
            <person name="Holzer E."/>
            <person name="Moestl D."/>
            <person name="Hilbert H."/>
            <person name="Borzym K."/>
            <person name="Langer I."/>
            <person name="Beck A."/>
            <person name="Lehrach H."/>
            <person name="Reinhardt R."/>
            <person name="Pohl T.M."/>
            <person name="Eger P."/>
            <person name="Zimmermann W."/>
            <person name="Wedler H."/>
            <person name="Wambutt R."/>
            <person name="Purnelle B."/>
            <person name="Goffeau A."/>
            <person name="Cadieu E."/>
            <person name="Dreano S."/>
            <person name="Gloux S."/>
            <person name="Lelaure V."/>
            <person name="Mottier S."/>
            <person name="Galibert F."/>
            <person name="Aves S.J."/>
            <person name="Xiang Z."/>
            <person name="Hunt C."/>
            <person name="Moore K."/>
            <person name="Hurst S.M."/>
            <person name="Lucas M."/>
            <person name="Rochet M."/>
            <person name="Gaillardin C."/>
            <person name="Tallada V.A."/>
            <person name="Garzon A."/>
            <person name="Thode G."/>
            <person name="Daga R.R."/>
            <person name="Cruzado L."/>
            <person name="Jimenez J."/>
            <person name="Sanchez M."/>
            <person name="del Rey F."/>
            <person name="Benito J."/>
            <person name="Dominguez A."/>
            <person name="Revuelta J.L."/>
            <person name="Moreno S."/>
            <person name="Armstrong J."/>
            <person name="Forsburg S.L."/>
            <person name="Cerutti L."/>
            <person name="Lowe T."/>
            <person name="McCombie W.R."/>
            <person name="Paulsen I."/>
            <person name="Potashkin J."/>
            <person name="Shpakovski G.V."/>
            <person name="Ussery D."/>
            <person name="Barrell B.G."/>
            <person name="Nurse P."/>
        </authorList>
    </citation>
    <scope>NUCLEOTIDE SEQUENCE [LARGE SCALE GENOMIC DNA]</scope>
    <source>
        <strain>972 / ATCC 24843</strain>
    </source>
</reference>
<sequence>MFSIFKRRSVQAALAASGLVGGAVFYSDFIKRPAPSHFNPQFTPFTKSLAPPPSRETLLKNVEDISKFDVLIIGGGATGTGVAVDASTRGLNVCLLEKTDFASETSSKSTKMAHGGVRYLEKAVFQLSKAQLDLVIEALNERANMLRTAPHLCTVLPIMIPVYKWWQVPYFFVGCKIYDWVAGSKNLRASTIFSKETTVAIAPMLDDSNLKASCVYHDGSFNDTRMNTTLAVTAIDNGATVLNYMEVKKLLKSKDNKLEGVLAIDRETGKEYQIKATSVVNATGPFSDKILEMDADPQGEPPKTAQFPRMVVPSAGVHVVLPEYYCPPNIGILDPSTSDNRVMFFLPWQGKVIAGTTDKPLSSVPTNPTPSEDDIQLILKELQKYLVFPVDREDVLSAWCGIRPLVRDPSTVPPGTDPTTGETQGLVRSHFIFKSDTGLLTISGGKWTTYREMAEETVNELIKDHDFGKALKPCQTKKLILVGGENYYKNYSARLIHEYHIPLRLAKHLSHNYGSRAPLILELYSKTDFNKLPVTLADKEVFAPSSDASSDKSVSYASFDEPFTVAELKYSIKYEYTRTPTDFLARRTRLAFLDARQALQAVAGVTHVMKEEFGWDDATTDKLAQEARDYIGGMGVSSDRFDVKQFEVK</sequence>
<proteinExistence type="inferred from homology"/>
<evidence type="ECO:0000250" key="1"/>
<evidence type="ECO:0000255" key="2"/>
<evidence type="ECO:0000305" key="3"/>
<feature type="transit peptide" description="Mitochondrion" evidence="2">
    <location>
        <begin position="1"/>
        <end status="unknown"/>
    </location>
</feature>
<feature type="chain" id="PRO_0000010433" description="Glycerol-3-phosphate dehydrogenase, mitochondrial">
    <location>
        <begin status="unknown"/>
        <end position="649"/>
    </location>
</feature>
<feature type="binding site" evidence="2">
    <location>
        <begin position="69"/>
        <end position="97"/>
    </location>
    <ligand>
        <name>FAD</name>
        <dbReference type="ChEBI" id="CHEBI:57692"/>
    </ligand>
</feature>
<comment type="catalytic activity">
    <reaction>
        <text>a quinone + sn-glycerol 3-phosphate = dihydroxyacetone phosphate + a quinol</text>
        <dbReference type="Rhea" id="RHEA:18977"/>
        <dbReference type="ChEBI" id="CHEBI:24646"/>
        <dbReference type="ChEBI" id="CHEBI:57597"/>
        <dbReference type="ChEBI" id="CHEBI:57642"/>
        <dbReference type="ChEBI" id="CHEBI:132124"/>
        <dbReference type="EC" id="1.1.5.3"/>
    </reaction>
</comment>
<comment type="cofactor">
    <cofactor evidence="1">
        <name>FAD</name>
        <dbReference type="ChEBI" id="CHEBI:57692"/>
    </cofactor>
</comment>
<comment type="pathway">
    <text>Polyol metabolism; glycerol degradation via glycerol kinase pathway; glycerone phosphate from sn-glycerol 3-phosphate (anaerobic route): step 1/1.</text>
</comment>
<comment type="subcellular location">
    <subcellularLocation>
        <location evidence="1">Mitochondrion</location>
    </subcellularLocation>
</comment>
<comment type="similarity">
    <text evidence="3">Belongs to the FAD-dependent glycerol-3-phosphate dehydrogenase family.</text>
</comment>
<dbReference type="EC" id="1.1.5.3"/>
<dbReference type="EMBL" id="Y14993">
    <property type="protein sequence ID" value="CAA75227.1"/>
    <property type="molecule type" value="Genomic_DNA"/>
</dbReference>
<dbReference type="EMBL" id="CU329672">
    <property type="protein sequence ID" value="CAA20872.1"/>
    <property type="molecule type" value="Genomic_DNA"/>
</dbReference>
<dbReference type="PIR" id="T40863">
    <property type="entry name" value="T40863"/>
</dbReference>
<dbReference type="RefSeq" id="NP_588348.1">
    <property type="nucleotide sequence ID" value="NM_001023339.2"/>
</dbReference>
<dbReference type="SMR" id="O14400"/>
<dbReference type="BioGRID" id="275787">
    <property type="interactions" value="12"/>
</dbReference>
<dbReference type="FunCoup" id="O14400">
    <property type="interactions" value="345"/>
</dbReference>
<dbReference type="STRING" id="284812.O14400"/>
<dbReference type="PaxDb" id="4896-SPCC1223.03c.1"/>
<dbReference type="EnsemblFungi" id="SPCC1223.03c.1">
    <property type="protein sequence ID" value="SPCC1223.03c.1:pep"/>
    <property type="gene ID" value="SPCC1223.03c"/>
</dbReference>
<dbReference type="GeneID" id="2539217"/>
<dbReference type="KEGG" id="spo:2539217"/>
<dbReference type="PomBase" id="SPCC1223.03c">
    <property type="gene designation" value="gut2"/>
</dbReference>
<dbReference type="VEuPathDB" id="FungiDB:SPCC1223.03c"/>
<dbReference type="eggNOG" id="KOG0042">
    <property type="taxonomic scope" value="Eukaryota"/>
</dbReference>
<dbReference type="HOGENOM" id="CLU_015740_4_1_1"/>
<dbReference type="InParanoid" id="O14400"/>
<dbReference type="OMA" id="PHIVKPM"/>
<dbReference type="PhylomeDB" id="O14400"/>
<dbReference type="Reactome" id="R-SPO-1483166">
    <property type="pathway name" value="Synthesis of PA"/>
</dbReference>
<dbReference type="Reactome" id="R-SPO-163560">
    <property type="pathway name" value="Triglyceride catabolism"/>
</dbReference>
<dbReference type="UniPathway" id="UPA00618">
    <property type="reaction ID" value="UER00673"/>
</dbReference>
<dbReference type="PRO" id="PR:O14400"/>
<dbReference type="Proteomes" id="UP000002485">
    <property type="component" value="Chromosome III"/>
</dbReference>
<dbReference type="GO" id="GO:0005739">
    <property type="term" value="C:mitochondrion"/>
    <property type="evidence" value="ECO:0007005"/>
    <property type="project" value="PomBase"/>
</dbReference>
<dbReference type="GO" id="GO:0004368">
    <property type="term" value="F:glycerol-3-phosphate dehydrogenase (quinone) activity"/>
    <property type="evidence" value="ECO:0000318"/>
    <property type="project" value="GO_Central"/>
</dbReference>
<dbReference type="GO" id="GO:0019563">
    <property type="term" value="P:glycerol catabolic process"/>
    <property type="evidence" value="ECO:0007669"/>
    <property type="project" value="UniProtKB-UniPathway"/>
</dbReference>
<dbReference type="GO" id="GO:0006072">
    <property type="term" value="P:glycerol-3-phosphate metabolic process"/>
    <property type="evidence" value="ECO:0000318"/>
    <property type="project" value="GO_Central"/>
</dbReference>
<dbReference type="GO" id="GO:0006127">
    <property type="term" value="P:glycerol-3-phosphate shuttle"/>
    <property type="evidence" value="ECO:0000318"/>
    <property type="project" value="GO_Central"/>
</dbReference>
<dbReference type="FunFam" id="1.10.8.870:FF:000005">
    <property type="entry name" value="Glycerol-3-phosphate dehydrogenase"/>
    <property type="match status" value="1"/>
</dbReference>
<dbReference type="FunFam" id="3.30.9.10:FF:000037">
    <property type="entry name" value="Glycerol-3-phosphate dehydrogenase"/>
    <property type="match status" value="1"/>
</dbReference>
<dbReference type="Gene3D" id="1.10.8.870">
    <property type="entry name" value="Alpha-glycerophosphate oxidase, cap domain"/>
    <property type="match status" value="1"/>
</dbReference>
<dbReference type="Gene3D" id="3.30.9.10">
    <property type="entry name" value="D-Amino Acid Oxidase, subunit A, domain 2"/>
    <property type="match status" value="1"/>
</dbReference>
<dbReference type="Gene3D" id="3.50.50.60">
    <property type="entry name" value="FAD/NAD(P)-binding domain"/>
    <property type="match status" value="1"/>
</dbReference>
<dbReference type="InterPro" id="IPR031656">
    <property type="entry name" value="DAO_C"/>
</dbReference>
<dbReference type="InterPro" id="IPR038299">
    <property type="entry name" value="DAO_C_sf"/>
</dbReference>
<dbReference type="InterPro" id="IPR006076">
    <property type="entry name" value="FAD-dep_OxRdtase"/>
</dbReference>
<dbReference type="InterPro" id="IPR036188">
    <property type="entry name" value="FAD/NAD-bd_sf"/>
</dbReference>
<dbReference type="InterPro" id="IPR000447">
    <property type="entry name" value="G3P_DH_FAD-dep"/>
</dbReference>
<dbReference type="PANTHER" id="PTHR11985">
    <property type="entry name" value="GLYCEROL-3-PHOSPHATE DEHYDROGENASE"/>
    <property type="match status" value="1"/>
</dbReference>
<dbReference type="PANTHER" id="PTHR11985:SF15">
    <property type="entry name" value="GLYCEROL-3-PHOSPHATE DEHYDROGENASE, MITOCHONDRIAL"/>
    <property type="match status" value="1"/>
</dbReference>
<dbReference type="Pfam" id="PF01266">
    <property type="entry name" value="DAO"/>
    <property type="match status" value="1"/>
</dbReference>
<dbReference type="Pfam" id="PF16901">
    <property type="entry name" value="DAO_C"/>
    <property type="match status" value="1"/>
</dbReference>
<dbReference type="PRINTS" id="PR01001">
    <property type="entry name" value="FADG3PDH"/>
</dbReference>
<dbReference type="SUPFAM" id="SSF54373">
    <property type="entry name" value="FAD-linked reductases, C-terminal domain"/>
    <property type="match status" value="1"/>
</dbReference>
<dbReference type="SUPFAM" id="SSF51905">
    <property type="entry name" value="FAD/NAD(P)-binding domain"/>
    <property type="match status" value="1"/>
</dbReference>
<dbReference type="PROSITE" id="PS00977">
    <property type="entry name" value="FAD_G3PDH_1"/>
    <property type="match status" value="1"/>
</dbReference>
<dbReference type="PROSITE" id="PS00978">
    <property type="entry name" value="FAD_G3PDH_2"/>
    <property type="match status" value="1"/>
</dbReference>